<gene>
    <name evidence="3 5" type="primary">fcs</name>
</gene>
<evidence type="ECO:0000250" key="1">
    <source>
        <dbReference type="UniProtKB" id="Q5SKN9"/>
    </source>
</evidence>
<evidence type="ECO:0000269" key="2">
    <source>
    </source>
</evidence>
<evidence type="ECO:0000303" key="3">
    <source>
    </source>
</evidence>
<evidence type="ECO:0000305" key="4"/>
<evidence type="ECO:0000312" key="5">
    <source>
        <dbReference type="EMBL" id="CAC18323.1"/>
    </source>
</evidence>
<comment type="function">
    <text evidence="2">Catalyzes the formation of (E)-feruloyl-CoA, AMP and diphosphate from (E)-ferulate, CoA and ATP. Involved in the degradation pathway of lignin-derived aromatic compounds of plant cell walls. Catalyzes the first enzymatic step in the conversion of ferulic acid into high value compound vanillin.</text>
</comment>
<comment type="catalytic activity">
    <reaction evidence="2">
        <text>(E)-ferulate + ATP + CoA = (E)-feruloyl-CoA + AMP + diphosphate</text>
        <dbReference type="Rhea" id="RHEA:36251"/>
        <dbReference type="ChEBI" id="CHEBI:29749"/>
        <dbReference type="ChEBI" id="CHEBI:30616"/>
        <dbReference type="ChEBI" id="CHEBI:33019"/>
        <dbReference type="ChEBI" id="CHEBI:57287"/>
        <dbReference type="ChEBI" id="CHEBI:87305"/>
        <dbReference type="ChEBI" id="CHEBI:456215"/>
        <dbReference type="EC" id="6.2.1.34"/>
    </reaction>
    <physiologicalReaction direction="left-to-right" evidence="2">
        <dbReference type="Rhea" id="RHEA:36252"/>
    </physiologicalReaction>
</comment>
<comment type="cofactor">
    <cofactor evidence="1">
        <name>Mg(2+)</name>
        <dbReference type="ChEBI" id="CHEBI:18420"/>
    </cofactor>
</comment>
<comment type="similarity">
    <text evidence="4">Belongs to the ATP-dependent AMP-binding enzyme family.</text>
</comment>
<organism>
    <name type="scientific">Amycolatopsis sp</name>
    <dbReference type="NCBI Taxonomy" id="37632"/>
    <lineage>
        <taxon>Bacteria</taxon>
        <taxon>Bacillati</taxon>
        <taxon>Actinomycetota</taxon>
        <taxon>Actinomycetes</taxon>
        <taxon>Pseudonocardiales</taxon>
        <taxon>Pseudonocardiaceae</taxon>
        <taxon>Amycolatopsis</taxon>
    </lineage>
</organism>
<dbReference type="EC" id="6.2.1.34" evidence="2"/>
<dbReference type="EMBL" id="AJ290449">
    <property type="protein sequence ID" value="CAC18323.1"/>
    <property type="molecule type" value="Genomic_DNA"/>
</dbReference>
<dbReference type="PDB" id="8WEU">
    <property type="method" value="X-ray"/>
    <property type="resolution" value="2.10 A"/>
    <property type="chains" value="A=1-491"/>
</dbReference>
<dbReference type="PDB" id="8WEV">
    <property type="method" value="X-ray"/>
    <property type="resolution" value="2.29 A"/>
    <property type="chains" value="A/B=1-491"/>
</dbReference>
<dbReference type="PDBsum" id="8WEU"/>
<dbReference type="PDBsum" id="8WEV"/>
<dbReference type="SMR" id="Q9EY88"/>
<dbReference type="GO" id="GO:0005524">
    <property type="term" value="F:ATP binding"/>
    <property type="evidence" value="ECO:0000250"/>
    <property type="project" value="UniProtKB"/>
</dbReference>
<dbReference type="GO" id="GO:0046872">
    <property type="term" value="F:metal ion binding"/>
    <property type="evidence" value="ECO:0007669"/>
    <property type="project" value="UniProtKB-KW"/>
</dbReference>
<dbReference type="GO" id="GO:0050563">
    <property type="term" value="F:trans-feruloyl-CoA synthase activity"/>
    <property type="evidence" value="ECO:0000314"/>
    <property type="project" value="UniProtKB"/>
</dbReference>
<dbReference type="GO" id="GO:0033494">
    <property type="term" value="P:ferulate metabolic process"/>
    <property type="evidence" value="ECO:0000314"/>
    <property type="project" value="UniProtKB"/>
</dbReference>
<dbReference type="GO" id="GO:0042189">
    <property type="term" value="P:vanillin biosynthetic process"/>
    <property type="evidence" value="ECO:0000314"/>
    <property type="project" value="UniProtKB"/>
</dbReference>
<dbReference type="CDD" id="cd17631">
    <property type="entry name" value="FACL_FadD13-like"/>
    <property type="match status" value="1"/>
</dbReference>
<dbReference type="FunFam" id="3.30.300.30:FF:000008">
    <property type="entry name" value="2,3-dihydroxybenzoate-AMP ligase"/>
    <property type="match status" value="1"/>
</dbReference>
<dbReference type="Gene3D" id="3.30.300.30">
    <property type="match status" value="1"/>
</dbReference>
<dbReference type="Gene3D" id="3.40.50.12780">
    <property type="entry name" value="N-terminal domain of ligase-like"/>
    <property type="match status" value="1"/>
</dbReference>
<dbReference type="InterPro" id="IPR025110">
    <property type="entry name" value="AMP-bd_C"/>
</dbReference>
<dbReference type="InterPro" id="IPR045851">
    <property type="entry name" value="AMP-bd_C_sf"/>
</dbReference>
<dbReference type="InterPro" id="IPR020845">
    <property type="entry name" value="AMP-binding_CS"/>
</dbReference>
<dbReference type="InterPro" id="IPR000873">
    <property type="entry name" value="AMP-dep_synth/lig_dom"/>
</dbReference>
<dbReference type="InterPro" id="IPR042099">
    <property type="entry name" value="ANL_N_sf"/>
</dbReference>
<dbReference type="InterPro" id="IPR050237">
    <property type="entry name" value="ATP-dep_AMP-bd_enzyme"/>
</dbReference>
<dbReference type="PANTHER" id="PTHR43767">
    <property type="entry name" value="LONG-CHAIN-FATTY-ACID--COA LIGASE"/>
    <property type="match status" value="1"/>
</dbReference>
<dbReference type="PANTHER" id="PTHR43767:SF7">
    <property type="entry name" value="MEDIUM_LONG-CHAIN-FATTY-ACID--COA LIGASE FADD8"/>
    <property type="match status" value="1"/>
</dbReference>
<dbReference type="Pfam" id="PF00501">
    <property type="entry name" value="AMP-binding"/>
    <property type="match status" value="1"/>
</dbReference>
<dbReference type="Pfam" id="PF13193">
    <property type="entry name" value="AMP-binding_C"/>
    <property type="match status" value="1"/>
</dbReference>
<dbReference type="SUPFAM" id="SSF56801">
    <property type="entry name" value="Acetyl-CoA synthetase-like"/>
    <property type="match status" value="1"/>
</dbReference>
<dbReference type="PROSITE" id="PS00455">
    <property type="entry name" value="AMP_BINDING"/>
    <property type="match status" value="1"/>
</dbReference>
<reference evidence="5" key="1">
    <citation type="journal article" date="2000" name="Appl. Microbiol. Biotechnol.">
        <title>Identification of Amycolatopsis sp. strain HR167 genes, involved in the bioconversion of ferulic acid to vanillin.</title>
        <authorList>
            <person name="Achterholt S."/>
            <person name="Priefert H."/>
            <person name="Steinbuchel A."/>
        </authorList>
    </citation>
    <scope>NUCLEOTIDE SEQUENCE [GENOMIC DNA]</scope>
    <scope>FUNCTION</scope>
    <scope>CATALYTIC ACTIVITY</scope>
    <source>
        <strain evidence="3 5">HR167</strain>
    </source>
</reference>
<protein>
    <recommendedName>
        <fullName evidence="4">Feruloyl-CoA synthase</fullName>
        <ecNumber evidence="2">6.2.1.34</ecNumber>
    </recommendedName>
    <alternativeName>
        <fullName evidence="3">Feruloyl coenzyme A synthetase</fullName>
    </alternativeName>
    <alternativeName>
        <fullName evidence="3 5">Feruloyl-CoA synthetase</fullName>
    </alternativeName>
</protein>
<feature type="chain" id="PRO_0000456539" description="Feruloyl-CoA synthase">
    <location>
        <begin position="1"/>
        <end position="491"/>
    </location>
</feature>
<feature type="binding site" evidence="1">
    <location>
        <position position="154"/>
    </location>
    <ligand>
        <name>Mg(2+)</name>
        <dbReference type="ChEBI" id="CHEBI:18420"/>
    </ligand>
</feature>
<feature type="binding site" evidence="1">
    <location>
        <position position="199"/>
    </location>
    <ligand>
        <name>ATP</name>
        <dbReference type="ChEBI" id="CHEBI:30616"/>
    </ligand>
</feature>
<feature type="binding site" evidence="1">
    <location>
        <position position="291"/>
    </location>
    <ligand>
        <name>ATP</name>
        <dbReference type="ChEBI" id="CHEBI:30616"/>
    </ligand>
</feature>
<feature type="binding site" evidence="1">
    <location>
        <position position="295"/>
    </location>
    <ligand>
        <name>ATP</name>
        <dbReference type="ChEBI" id="CHEBI:30616"/>
    </ligand>
</feature>
<feature type="binding site" evidence="1">
    <location>
        <position position="296"/>
    </location>
    <ligand>
        <name>Mg(2+)</name>
        <dbReference type="ChEBI" id="CHEBI:18420"/>
    </ligand>
</feature>
<feature type="binding site" evidence="1">
    <location>
        <position position="374"/>
    </location>
    <ligand>
        <name>ATP</name>
        <dbReference type="ChEBI" id="CHEBI:30616"/>
    </ligand>
</feature>
<feature type="binding site" evidence="1">
    <location>
        <position position="391"/>
    </location>
    <ligand>
        <name>ATP</name>
        <dbReference type="ChEBI" id="CHEBI:30616"/>
    </ligand>
</feature>
<sequence>MRNQGLGSWPVRRARMSPHATAVRHGGTALTYAELSRRVARLANGLRAAGVRPGDRVAYLGPNHPAYLETLFACGQAGAVFVPLNFRLGVPELDHALADSGASVLIHTPEHAETVAALAAGRLLRVPAGELDAADDEPPDLPVGLDDVCLLMYTSGSTGRPKGAMLTHGNLTWNCVNVLVETDLASDERALVAAPLFHAAALGMVCLPTLLKGGTVILHSAFDPGAVLSAVEQERVTLVFGVPTMYQAIAAHPRWRSADLSSLRTLLCGGAPVPADLASRYLDRGLAFVQGYGMTEAAPGVLVLDRAHVAEKIGSAGVPSFFTDVRLAGPSGEPVPPGEKGEIVVSGPNVMKGYWGRPEATAEVLRDGWFHSGDVATVDGDGYFHVVDRLKDMIISGGENIYPAEVENELYGYPGVEACAVIGVPDPRWGEVGKAVVVPADGSRIDGDELLAWLRTRLAGYKVPKSVEFTDRLPTTGSGKILKGEVRRRFG</sequence>
<proteinExistence type="evidence at protein level"/>
<accession>Q9EY88</accession>
<name>FCS_AMYSP</name>
<keyword id="KW-0002">3D-structure</keyword>
<keyword id="KW-0067">ATP-binding</keyword>
<keyword id="KW-0436">Ligase</keyword>
<keyword id="KW-0460">Magnesium</keyword>
<keyword id="KW-0479">Metal-binding</keyword>
<keyword id="KW-0547">Nucleotide-binding</keyword>